<comment type="function">
    <text evidence="1">The alpha subunit is responsible for the aldol cleavage of indoleglycerol phosphate to indole and glyceraldehyde 3-phosphate.</text>
</comment>
<comment type="catalytic activity">
    <reaction evidence="1">
        <text>(1S,2R)-1-C-(indol-3-yl)glycerol 3-phosphate + L-serine = D-glyceraldehyde 3-phosphate + L-tryptophan + H2O</text>
        <dbReference type="Rhea" id="RHEA:10532"/>
        <dbReference type="ChEBI" id="CHEBI:15377"/>
        <dbReference type="ChEBI" id="CHEBI:33384"/>
        <dbReference type="ChEBI" id="CHEBI:57912"/>
        <dbReference type="ChEBI" id="CHEBI:58866"/>
        <dbReference type="ChEBI" id="CHEBI:59776"/>
        <dbReference type="EC" id="4.2.1.20"/>
    </reaction>
</comment>
<comment type="pathway">
    <text evidence="1">Amino-acid biosynthesis; L-tryptophan biosynthesis; L-tryptophan from chorismate: step 5/5.</text>
</comment>
<comment type="subunit">
    <text evidence="1">Tetramer of two alpha and two beta chains.</text>
</comment>
<comment type="similarity">
    <text evidence="1">Belongs to the TrpA family.</text>
</comment>
<sequence length="249" mass="27967">MVDFRKFYKENANVAYTVLGYPNLQTSEAFLQRLDQSPIDILELGVAYSDPIADGEIIADAAKIALDQGVDIHSVFELLARIKTKKALVFMVYYNLIFSYGLEKFVKKAKSLGICALIVPELSFEESDDLIKECERYNIALITLVSVTTPKERVKKLVKHAKGFIYLLASIGITGTKSVEEAILQDKVKEIRSFTNLPIFVGFGIQNNQDVKRMRKVADGVIVGTSIVKCFKQGNLDIIMKDIEEIFKK</sequence>
<organism>
    <name type="scientific">Campylobacter jejuni subsp. jejuni serotype O:2 (strain ATCC 700819 / NCTC 11168)</name>
    <dbReference type="NCBI Taxonomy" id="192222"/>
    <lineage>
        <taxon>Bacteria</taxon>
        <taxon>Pseudomonadati</taxon>
        <taxon>Campylobacterota</taxon>
        <taxon>Epsilonproteobacteria</taxon>
        <taxon>Campylobacterales</taxon>
        <taxon>Campylobacteraceae</taxon>
        <taxon>Campylobacter</taxon>
    </lineage>
</organism>
<gene>
    <name evidence="1" type="primary">trpA</name>
    <name type="ordered locus">Cj0349</name>
</gene>
<proteinExistence type="evidence at protein level"/>
<dbReference type="EC" id="4.2.1.20" evidence="1"/>
<dbReference type="EMBL" id="AL111168">
    <property type="protein sequence ID" value="CAL34500.1"/>
    <property type="molecule type" value="Genomic_DNA"/>
</dbReference>
<dbReference type="PIR" id="D81377">
    <property type="entry name" value="D81377"/>
</dbReference>
<dbReference type="RefSeq" id="WP_002854645.1">
    <property type="nucleotide sequence ID" value="NZ_SZUC01000004.1"/>
</dbReference>
<dbReference type="RefSeq" id="YP_002343787.1">
    <property type="nucleotide sequence ID" value="NC_002163.1"/>
</dbReference>
<dbReference type="PDB" id="3THA">
    <property type="method" value="X-ray"/>
    <property type="resolution" value="2.37 A"/>
    <property type="chains" value="A/B=1-249"/>
</dbReference>
<dbReference type="PDBsum" id="3THA"/>
<dbReference type="SMR" id="Q9PIF1"/>
<dbReference type="IntAct" id="Q9PIF1">
    <property type="interactions" value="2"/>
</dbReference>
<dbReference type="STRING" id="192222.Cj0349"/>
<dbReference type="PaxDb" id="192222-Cj0349"/>
<dbReference type="EnsemblBacteria" id="CAL34500">
    <property type="protein sequence ID" value="CAL34500"/>
    <property type="gene ID" value="Cj0349"/>
</dbReference>
<dbReference type="GeneID" id="904673"/>
<dbReference type="KEGG" id="cje:Cj0349"/>
<dbReference type="PATRIC" id="fig|192222.6.peg.341"/>
<dbReference type="eggNOG" id="COG0159">
    <property type="taxonomic scope" value="Bacteria"/>
</dbReference>
<dbReference type="HOGENOM" id="CLU_016734_0_0_7"/>
<dbReference type="OrthoDB" id="9804578at2"/>
<dbReference type="UniPathway" id="UPA00035">
    <property type="reaction ID" value="UER00044"/>
</dbReference>
<dbReference type="EvolutionaryTrace" id="Q9PIF1"/>
<dbReference type="Proteomes" id="UP000000799">
    <property type="component" value="Chromosome"/>
</dbReference>
<dbReference type="GO" id="GO:0005829">
    <property type="term" value="C:cytosol"/>
    <property type="evidence" value="ECO:0007669"/>
    <property type="project" value="TreeGrafter"/>
</dbReference>
<dbReference type="GO" id="GO:0004834">
    <property type="term" value="F:tryptophan synthase activity"/>
    <property type="evidence" value="ECO:0007669"/>
    <property type="project" value="UniProtKB-UniRule"/>
</dbReference>
<dbReference type="CDD" id="cd04724">
    <property type="entry name" value="Tryptophan_synthase_alpha"/>
    <property type="match status" value="1"/>
</dbReference>
<dbReference type="Gene3D" id="3.20.20.70">
    <property type="entry name" value="Aldolase class I"/>
    <property type="match status" value="1"/>
</dbReference>
<dbReference type="HAMAP" id="MF_00131">
    <property type="entry name" value="Trp_synth_alpha"/>
    <property type="match status" value="1"/>
</dbReference>
<dbReference type="InterPro" id="IPR013785">
    <property type="entry name" value="Aldolase_TIM"/>
</dbReference>
<dbReference type="InterPro" id="IPR011060">
    <property type="entry name" value="RibuloseP-bd_barrel"/>
</dbReference>
<dbReference type="InterPro" id="IPR018204">
    <property type="entry name" value="Trp_synthase_alpha_AS"/>
</dbReference>
<dbReference type="InterPro" id="IPR002028">
    <property type="entry name" value="Trp_synthase_suA"/>
</dbReference>
<dbReference type="NCBIfam" id="TIGR00262">
    <property type="entry name" value="trpA"/>
    <property type="match status" value="1"/>
</dbReference>
<dbReference type="PANTHER" id="PTHR43406:SF1">
    <property type="entry name" value="TRYPTOPHAN SYNTHASE ALPHA CHAIN, CHLOROPLASTIC"/>
    <property type="match status" value="1"/>
</dbReference>
<dbReference type="PANTHER" id="PTHR43406">
    <property type="entry name" value="TRYPTOPHAN SYNTHASE, ALPHA CHAIN"/>
    <property type="match status" value="1"/>
</dbReference>
<dbReference type="Pfam" id="PF00290">
    <property type="entry name" value="Trp_syntA"/>
    <property type="match status" value="1"/>
</dbReference>
<dbReference type="SUPFAM" id="SSF51366">
    <property type="entry name" value="Ribulose-phoshate binding barrel"/>
    <property type="match status" value="1"/>
</dbReference>
<dbReference type="PROSITE" id="PS00167">
    <property type="entry name" value="TRP_SYNTHASE_ALPHA"/>
    <property type="match status" value="1"/>
</dbReference>
<feature type="chain" id="PRO_0000098762" description="Tryptophan synthase alpha chain">
    <location>
        <begin position="1"/>
        <end position="249"/>
    </location>
</feature>
<feature type="active site" description="Proton acceptor" evidence="1">
    <location>
        <position position="43"/>
    </location>
</feature>
<feature type="active site" description="Proton acceptor" evidence="1">
    <location>
        <position position="54"/>
    </location>
</feature>
<feature type="helix" evidence="2">
    <location>
        <begin position="4"/>
        <end position="6"/>
    </location>
</feature>
<feature type="strand" evidence="2">
    <location>
        <begin position="9"/>
        <end position="18"/>
    </location>
</feature>
<feature type="helix" evidence="2">
    <location>
        <begin position="24"/>
        <end position="32"/>
    </location>
</feature>
<feature type="helix" evidence="2">
    <location>
        <begin position="33"/>
        <end position="36"/>
    </location>
</feature>
<feature type="strand" evidence="2">
    <location>
        <begin position="40"/>
        <end position="45"/>
    </location>
</feature>
<feature type="helix" evidence="2">
    <location>
        <begin position="57"/>
        <end position="67"/>
    </location>
</feature>
<feature type="helix" evidence="2">
    <location>
        <begin position="72"/>
        <end position="81"/>
    </location>
</feature>
<feature type="strand" evidence="2">
    <location>
        <begin position="85"/>
        <end position="91"/>
    </location>
</feature>
<feature type="helix" evidence="2">
    <location>
        <begin position="94"/>
        <end position="100"/>
    </location>
</feature>
<feature type="helix" evidence="2">
    <location>
        <begin position="102"/>
        <end position="111"/>
    </location>
</feature>
<feature type="strand" evidence="2">
    <location>
        <begin position="114"/>
        <end position="118"/>
    </location>
</feature>
<feature type="helix" evidence="2">
    <location>
        <begin position="124"/>
        <end position="126"/>
    </location>
</feature>
<feature type="helix" evidence="2">
    <location>
        <begin position="128"/>
        <end position="136"/>
    </location>
</feature>
<feature type="strand" evidence="2">
    <location>
        <begin position="143"/>
        <end position="146"/>
    </location>
</feature>
<feature type="helix" evidence="2">
    <location>
        <begin position="151"/>
        <end position="158"/>
    </location>
</feature>
<feature type="strand" evidence="2">
    <location>
        <begin position="165"/>
        <end position="168"/>
    </location>
</feature>
<feature type="strand" evidence="2">
    <location>
        <begin position="173"/>
        <end position="175"/>
    </location>
</feature>
<feature type="helix" evidence="2">
    <location>
        <begin position="178"/>
        <end position="192"/>
    </location>
</feature>
<feature type="strand" evidence="2">
    <location>
        <begin position="199"/>
        <end position="204"/>
    </location>
</feature>
<feature type="helix" evidence="2">
    <location>
        <begin position="208"/>
        <end position="214"/>
    </location>
</feature>
<feature type="turn" evidence="2">
    <location>
        <begin position="215"/>
        <end position="217"/>
    </location>
</feature>
<feature type="strand" evidence="2">
    <location>
        <begin position="218"/>
        <end position="223"/>
    </location>
</feature>
<feature type="helix" evidence="2">
    <location>
        <begin position="225"/>
        <end position="230"/>
    </location>
</feature>
<feature type="helix" evidence="2">
    <location>
        <begin position="236"/>
        <end position="246"/>
    </location>
</feature>
<accession>Q9PIF1</accession>
<accession>Q0PBG0</accession>
<reference key="1">
    <citation type="journal article" date="2000" name="Nature">
        <title>The genome sequence of the food-borne pathogen Campylobacter jejuni reveals hypervariable sequences.</title>
        <authorList>
            <person name="Parkhill J."/>
            <person name="Wren B.W."/>
            <person name="Mungall K.L."/>
            <person name="Ketley J.M."/>
            <person name="Churcher C.M."/>
            <person name="Basham D."/>
            <person name="Chillingworth T."/>
            <person name="Davies R.M."/>
            <person name="Feltwell T."/>
            <person name="Holroyd S."/>
            <person name="Jagels K."/>
            <person name="Karlyshev A.V."/>
            <person name="Moule S."/>
            <person name="Pallen M.J."/>
            <person name="Penn C.W."/>
            <person name="Quail M.A."/>
            <person name="Rajandream M.A."/>
            <person name="Rutherford K.M."/>
            <person name="van Vliet A.H.M."/>
            <person name="Whitehead S."/>
            <person name="Barrell B.G."/>
        </authorList>
    </citation>
    <scope>NUCLEOTIDE SEQUENCE [LARGE SCALE GENOMIC DNA]</scope>
    <source>
        <strain>ATCC 700819 / NCTC 11168</strain>
    </source>
</reference>
<evidence type="ECO:0000255" key="1">
    <source>
        <dbReference type="HAMAP-Rule" id="MF_00131"/>
    </source>
</evidence>
<evidence type="ECO:0007829" key="2">
    <source>
        <dbReference type="PDB" id="3THA"/>
    </source>
</evidence>
<protein>
    <recommendedName>
        <fullName evidence="1">Tryptophan synthase alpha chain</fullName>
        <ecNumber evidence="1">4.2.1.20</ecNumber>
    </recommendedName>
</protein>
<name>TRPA_CAMJE</name>
<keyword id="KW-0002">3D-structure</keyword>
<keyword id="KW-0028">Amino-acid biosynthesis</keyword>
<keyword id="KW-0057">Aromatic amino acid biosynthesis</keyword>
<keyword id="KW-0456">Lyase</keyword>
<keyword id="KW-1185">Reference proteome</keyword>
<keyword id="KW-0822">Tryptophan biosynthesis</keyword>